<reference key="1">
    <citation type="submission" date="2006-09" db="EMBL/GenBank/DDBJ databases">
        <authorList>
            <consortium name="The Klebsiella pneumonia Genome Sequencing Project"/>
            <person name="McClelland M."/>
            <person name="Sanderson E.K."/>
            <person name="Spieth J."/>
            <person name="Clifton W.S."/>
            <person name="Latreille P."/>
            <person name="Sabo A."/>
            <person name="Pepin K."/>
            <person name="Bhonagiri V."/>
            <person name="Porwollik S."/>
            <person name="Ali J."/>
            <person name="Wilson R.K."/>
        </authorList>
    </citation>
    <scope>NUCLEOTIDE SEQUENCE [LARGE SCALE GENOMIC DNA]</scope>
    <source>
        <strain>ATCC 700721 / MGH 78578</strain>
    </source>
</reference>
<sequence length="163" mass="18353">MPSFDIVSEVDLQEARNAVDNASREVESRFDFRGVEATFELNDANKTIKVLSESDFQVNQLLDILRAKLLKRGIEGTSLDVPEDIVHSGKTWFVEAKLKQGIESAVQKKIVKMIKDSKLKVQAQIQGEEIRVTGKSRDDLQSVMALVRGGDLGQPFQFKNFRD</sequence>
<protein>
    <recommendedName>
        <fullName evidence="1">Nucleotide-binding protein KPN78578_03700</fullName>
    </recommendedName>
</protein>
<proteinExistence type="inferred from homology"/>
<comment type="function">
    <text evidence="1">Nucleotide-binding protein.</text>
</comment>
<comment type="similarity">
    <text evidence="1">Belongs to the YajQ family.</text>
</comment>
<feature type="chain" id="PRO_1000061401" description="Nucleotide-binding protein KPN78578_03700">
    <location>
        <begin position="1"/>
        <end position="163"/>
    </location>
</feature>
<name>Y370_KLEP7</name>
<gene>
    <name type="ordered locus">KPN78578_03700</name>
    <name type="ORF">KPN_00379</name>
</gene>
<organism>
    <name type="scientific">Klebsiella pneumoniae subsp. pneumoniae (strain ATCC 700721 / MGH 78578)</name>
    <dbReference type="NCBI Taxonomy" id="272620"/>
    <lineage>
        <taxon>Bacteria</taxon>
        <taxon>Pseudomonadati</taxon>
        <taxon>Pseudomonadota</taxon>
        <taxon>Gammaproteobacteria</taxon>
        <taxon>Enterobacterales</taxon>
        <taxon>Enterobacteriaceae</taxon>
        <taxon>Klebsiella/Raoultella group</taxon>
        <taxon>Klebsiella</taxon>
        <taxon>Klebsiella pneumoniae complex</taxon>
    </lineage>
</organism>
<keyword id="KW-0547">Nucleotide-binding</keyword>
<accession>A6T5G0</accession>
<evidence type="ECO:0000255" key="1">
    <source>
        <dbReference type="HAMAP-Rule" id="MF_00632"/>
    </source>
</evidence>
<dbReference type="EMBL" id="CP000647">
    <property type="protein sequence ID" value="ABR75831.1"/>
    <property type="molecule type" value="Genomic_DNA"/>
</dbReference>
<dbReference type="SMR" id="A6T5G0"/>
<dbReference type="STRING" id="272620.KPN_00379"/>
<dbReference type="jPOST" id="A6T5G0"/>
<dbReference type="PaxDb" id="272620-KPN_00379"/>
<dbReference type="EnsemblBacteria" id="ABR75831">
    <property type="protein sequence ID" value="ABR75831"/>
    <property type="gene ID" value="KPN_00379"/>
</dbReference>
<dbReference type="KEGG" id="kpn:KPN_00379"/>
<dbReference type="HOGENOM" id="CLU_099839_1_0_6"/>
<dbReference type="Proteomes" id="UP000000265">
    <property type="component" value="Chromosome"/>
</dbReference>
<dbReference type="GO" id="GO:0005829">
    <property type="term" value="C:cytosol"/>
    <property type="evidence" value="ECO:0007669"/>
    <property type="project" value="TreeGrafter"/>
</dbReference>
<dbReference type="GO" id="GO:0000166">
    <property type="term" value="F:nucleotide binding"/>
    <property type="evidence" value="ECO:0007669"/>
    <property type="project" value="TreeGrafter"/>
</dbReference>
<dbReference type="CDD" id="cd11740">
    <property type="entry name" value="YajQ_like"/>
    <property type="match status" value="1"/>
</dbReference>
<dbReference type="FunFam" id="3.30.70.860:FF:000001">
    <property type="entry name" value="UPF0234 protein YajQ"/>
    <property type="match status" value="1"/>
</dbReference>
<dbReference type="FunFam" id="3.30.70.990:FF:000001">
    <property type="entry name" value="UPF0234 protein YajQ"/>
    <property type="match status" value="1"/>
</dbReference>
<dbReference type="Gene3D" id="3.30.70.860">
    <property type="match status" value="1"/>
</dbReference>
<dbReference type="Gene3D" id="3.30.70.990">
    <property type="entry name" value="YajQ-like, domain 2"/>
    <property type="match status" value="1"/>
</dbReference>
<dbReference type="HAMAP" id="MF_00632">
    <property type="entry name" value="YajQ"/>
    <property type="match status" value="1"/>
</dbReference>
<dbReference type="InterPro" id="IPR007551">
    <property type="entry name" value="DUF520"/>
</dbReference>
<dbReference type="InterPro" id="IPR035571">
    <property type="entry name" value="UPF0234-like_C"/>
</dbReference>
<dbReference type="InterPro" id="IPR035570">
    <property type="entry name" value="UPF0234_N"/>
</dbReference>
<dbReference type="InterPro" id="IPR036183">
    <property type="entry name" value="YajQ-like_sf"/>
</dbReference>
<dbReference type="NCBIfam" id="NF003819">
    <property type="entry name" value="PRK05412.1"/>
    <property type="match status" value="1"/>
</dbReference>
<dbReference type="PANTHER" id="PTHR30476">
    <property type="entry name" value="UPF0234 PROTEIN YAJQ"/>
    <property type="match status" value="1"/>
</dbReference>
<dbReference type="PANTHER" id="PTHR30476:SF0">
    <property type="entry name" value="UPF0234 PROTEIN YAJQ"/>
    <property type="match status" value="1"/>
</dbReference>
<dbReference type="Pfam" id="PF04461">
    <property type="entry name" value="DUF520"/>
    <property type="match status" value="1"/>
</dbReference>
<dbReference type="SUPFAM" id="SSF89963">
    <property type="entry name" value="YajQ-like"/>
    <property type="match status" value="2"/>
</dbReference>